<accession>Q0THJ8</accession>
<organism>
    <name type="scientific">Escherichia coli O6:K15:H31 (strain 536 / UPEC)</name>
    <dbReference type="NCBI Taxonomy" id="362663"/>
    <lineage>
        <taxon>Bacteria</taxon>
        <taxon>Pseudomonadati</taxon>
        <taxon>Pseudomonadota</taxon>
        <taxon>Gammaproteobacteria</taxon>
        <taxon>Enterobacterales</taxon>
        <taxon>Enterobacteriaceae</taxon>
        <taxon>Escherichia</taxon>
    </lineage>
</organism>
<feature type="chain" id="PRO_1000013602" description="Ion-translocating oxidoreductase complex subunit C">
    <location>
        <begin position="1"/>
        <end position="774"/>
    </location>
</feature>
<feature type="domain" description="4Fe-4S ferredoxin-type 1" evidence="1">
    <location>
        <begin position="369"/>
        <end position="397"/>
    </location>
</feature>
<feature type="domain" description="4Fe-4S ferredoxin-type 2" evidence="1">
    <location>
        <begin position="407"/>
        <end position="436"/>
    </location>
</feature>
<feature type="region of interest" description="Disordered" evidence="2">
    <location>
        <begin position="602"/>
        <end position="750"/>
    </location>
</feature>
<feature type="binding site" evidence="1">
    <location>
        <position position="377"/>
    </location>
    <ligand>
        <name>[4Fe-4S] cluster</name>
        <dbReference type="ChEBI" id="CHEBI:49883"/>
        <label>1</label>
    </ligand>
</feature>
<feature type="binding site" evidence="1">
    <location>
        <position position="380"/>
    </location>
    <ligand>
        <name>[4Fe-4S] cluster</name>
        <dbReference type="ChEBI" id="CHEBI:49883"/>
        <label>1</label>
    </ligand>
</feature>
<feature type="binding site" evidence="1">
    <location>
        <position position="383"/>
    </location>
    <ligand>
        <name>[4Fe-4S] cluster</name>
        <dbReference type="ChEBI" id="CHEBI:49883"/>
        <label>1</label>
    </ligand>
</feature>
<feature type="binding site" evidence="1">
    <location>
        <position position="387"/>
    </location>
    <ligand>
        <name>[4Fe-4S] cluster</name>
        <dbReference type="ChEBI" id="CHEBI:49883"/>
        <label>2</label>
    </ligand>
</feature>
<feature type="binding site" evidence="1">
    <location>
        <position position="416"/>
    </location>
    <ligand>
        <name>[4Fe-4S] cluster</name>
        <dbReference type="ChEBI" id="CHEBI:49883"/>
        <label>2</label>
    </ligand>
</feature>
<feature type="binding site" evidence="1">
    <location>
        <position position="419"/>
    </location>
    <ligand>
        <name>[4Fe-4S] cluster</name>
        <dbReference type="ChEBI" id="CHEBI:49883"/>
        <label>2</label>
    </ligand>
</feature>
<feature type="binding site" evidence="1">
    <location>
        <position position="422"/>
    </location>
    <ligand>
        <name>[4Fe-4S] cluster</name>
        <dbReference type="ChEBI" id="CHEBI:49883"/>
        <label>2</label>
    </ligand>
</feature>
<feature type="binding site" evidence="1">
    <location>
        <position position="426"/>
    </location>
    <ligand>
        <name>[4Fe-4S] cluster</name>
        <dbReference type="ChEBI" id="CHEBI:49883"/>
        <label>1</label>
    </ligand>
</feature>
<dbReference type="EC" id="7.-.-.-" evidence="1"/>
<dbReference type="EMBL" id="CP000247">
    <property type="protein sequence ID" value="ABG69581.1"/>
    <property type="molecule type" value="Genomic_DNA"/>
</dbReference>
<dbReference type="RefSeq" id="WP_000915838.1">
    <property type="nucleotide sequence ID" value="NC_008253.1"/>
</dbReference>
<dbReference type="SMR" id="Q0THJ8"/>
<dbReference type="KEGG" id="ecp:ECP_1574"/>
<dbReference type="HOGENOM" id="CLU_010808_2_1_6"/>
<dbReference type="Proteomes" id="UP000009182">
    <property type="component" value="Chromosome"/>
</dbReference>
<dbReference type="GO" id="GO:0005886">
    <property type="term" value="C:plasma membrane"/>
    <property type="evidence" value="ECO:0007669"/>
    <property type="project" value="UniProtKB-SubCell"/>
</dbReference>
<dbReference type="GO" id="GO:0051539">
    <property type="term" value="F:4 iron, 4 sulfur cluster binding"/>
    <property type="evidence" value="ECO:0007669"/>
    <property type="project" value="UniProtKB-KW"/>
</dbReference>
<dbReference type="GO" id="GO:0009055">
    <property type="term" value="F:electron transfer activity"/>
    <property type="evidence" value="ECO:0007669"/>
    <property type="project" value="InterPro"/>
</dbReference>
<dbReference type="GO" id="GO:0046872">
    <property type="term" value="F:metal ion binding"/>
    <property type="evidence" value="ECO:0007669"/>
    <property type="project" value="UniProtKB-KW"/>
</dbReference>
<dbReference type="GO" id="GO:0022900">
    <property type="term" value="P:electron transport chain"/>
    <property type="evidence" value="ECO:0007669"/>
    <property type="project" value="UniProtKB-UniRule"/>
</dbReference>
<dbReference type="Gene3D" id="3.30.70.20">
    <property type="match status" value="1"/>
</dbReference>
<dbReference type="Gene3D" id="3.40.50.11540">
    <property type="entry name" value="NADH-ubiquinone oxidoreductase 51kDa subunit"/>
    <property type="match status" value="1"/>
</dbReference>
<dbReference type="HAMAP" id="MF_00461">
    <property type="entry name" value="RsxC_RnfC"/>
    <property type="match status" value="1"/>
</dbReference>
<dbReference type="InterPro" id="IPR017896">
    <property type="entry name" value="4Fe4S_Fe-S-bd"/>
</dbReference>
<dbReference type="InterPro" id="IPR017900">
    <property type="entry name" value="4Fe4S_Fe_S_CS"/>
</dbReference>
<dbReference type="InterPro" id="IPR010208">
    <property type="entry name" value="Ion_transpt_RnfC/RsxC"/>
</dbReference>
<dbReference type="InterPro" id="IPR011538">
    <property type="entry name" value="Nuo51_FMN-bd"/>
</dbReference>
<dbReference type="InterPro" id="IPR037225">
    <property type="entry name" value="Nuo51_FMN-bd_sf"/>
</dbReference>
<dbReference type="InterPro" id="IPR026902">
    <property type="entry name" value="RnfC_N"/>
</dbReference>
<dbReference type="InterPro" id="IPR019554">
    <property type="entry name" value="Soluble_ligand-bd"/>
</dbReference>
<dbReference type="NCBIfam" id="NF003454">
    <property type="entry name" value="PRK05035.1"/>
    <property type="match status" value="1"/>
</dbReference>
<dbReference type="NCBIfam" id="TIGR01945">
    <property type="entry name" value="rnfC"/>
    <property type="match status" value="1"/>
</dbReference>
<dbReference type="PANTHER" id="PTHR43034">
    <property type="entry name" value="ION-TRANSLOCATING OXIDOREDUCTASE COMPLEX SUBUNIT C"/>
    <property type="match status" value="1"/>
</dbReference>
<dbReference type="PANTHER" id="PTHR43034:SF2">
    <property type="entry name" value="ION-TRANSLOCATING OXIDOREDUCTASE COMPLEX SUBUNIT C"/>
    <property type="match status" value="1"/>
</dbReference>
<dbReference type="Pfam" id="PF01512">
    <property type="entry name" value="Complex1_51K"/>
    <property type="match status" value="1"/>
</dbReference>
<dbReference type="Pfam" id="PF12838">
    <property type="entry name" value="Fer4_7"/>
    <property type="match status" value="1"/>
</dbReference>
<dbReference type="Pfam" id="PF13375">
    <property type="entry name" value="RnfC_N"/>
    <property type="match status" value="1"/>
</dbReference>
<dbReference type="Pfam" id="PF10531">
    <property type="entry name" value="SLBB"/>
    <property type="match status" value="1"/>
</dbReference>
<dbReference type="SUPFAM" id="SSF46548">
    <property type="entry name" value="alpha-helical ferredoxin"/>
    <property type="match status" value="1"/>
</dbReference>
<dbReference type="SUPFAM" id="SSF142019">
    <property type="entry name" value="Nqo1 FMN-binding domain-like"/>
    <property type="match status" value="1"/>
</dbReference>
<dbReference type="PROSITE" id="PS00198">
    <property type="entry name" value="4FE4S_FER_1"/>
    <property type="match status" value="2"/>
</dbReference>
<dbReference type="PROSITE" id="PS51379">
    <property type="entry name" value="4FE4S_FER_2"/>
    <property type="match status" value="2"/>
</dbReference>
<sequence>MLKLFSAFRKNKIWDFNGGIHPPEMKTQSNGTPLRQVPLAQRFVIPLKQHIGAEGELCVSVGDNVLRGQPLTRGRGKMLPVHAPTSGTVTAIAPHSTAHPSALAELSVIIDADGEDCWIPRDGWADYRSRSREELIERIHQFGVAGLGGAGFPTGVKLQGGGDKIETLIINAAECEPYITADDRLMQDCAAQVVEGIRILAHILQPREILIGIEDNKPQAISMLRAVLADSHDISLRVIPTKYPSGGAKQLTYILTGKQVPHGGRSSDIGVLMQNVGTAYAVKRAVIDGEPITERVVTLTGEAIARPGNVWARLGTPVRHLLNDAGFCPSADQMVIMGGPLMGFTLPWLDVPVVKITNCLLAPSANELGEPQEEQSCIRCSACADACPADLLPQQLYWFSKGQQHDKATTHNIADCIECGACAWVCPSNIPLVQYFRQEKAEIAAIRQEEKRAAEAKARFEARQARLEREKAARLERHKSAAVQPAAKDKDAIAAALARVKEKQAQATQPIVIKAGERPDNSAIIAAREARKAQARAKQAELQQTNDAATVADPRKTAVEAAIARAKARKLEQQQANAEPEQQVDPRKAAVEAAIARAKARKLEQQQANAEPEEQVDPRKAAVEAAIARAKARKLEQQQANAEPEEQIDPRKAAVEAAIARAKARKLEQQQQANAEPEEQVDPRKAAVEAAIARAKARKLEQQQQANAEPEEQVDPRKAAVEAAIARAKARKLEQQQANAEPEEQIDPRKAAVAAAIARAQAKKAAQQKVVNED</sequence>
<gene>
    <name evidence="1" type="primary">rsxC</name>
    <name type="ordered locus">ECP_1574</name>
</gene>
<protein>
    <recommendedName>
        <fullName evidence="1">Ion-translocating oxidoreductase complex subunit C</fullName>
        <ecNumber evidence="1">7.-.-.-</ecNumber>
    </recommendedName>
    <alternativeName>
        <fullName evidence="1">Rsx electron transport complex subunit C</fullName>
    </alternativeName>
</protein>
<keyword id="KW-0004">4Fe-4S</keyword>
<keyword id="KW-0997">Cell inner membrane</keyword>
<keyword id="KW-1003">Cell membrane</keyword>
<keyword id="KW-0249">Electron transport</keyword>
<keyword id="KW-0408">Iron</keyword>
<keyword id="KW-0411">Iron-sulfur</keyword>
<keyword id="KW-0472">Membrane</keyword>
<keyword id="KW-0479">Metal-binding</keyword>
<keyword id="KW-0677">Repeat</keyword>
<keyword id="KW-1278">Translocase</keyword>
<keyword id="KW-0813">Transport</keyword>
<reference key="1">
    <citation type="journal article" date="2006" name="Mol. Microbiol.">
        <title>Role of pathogenicity island-associated integrases in the genome plasticity of uropathogenic Escherichia coli strain 536.</title>
        <authorList>
            <person name="Hochhut B."/>
            <person name="Wilde C."/>
            <person name="Balling G."/>
            <person name="Middendorf B."/>
            <person name="Dobrindt U."/>
            <person name="Brzuszkiewicz E."/>
            <person name="Gottschalk G."/>
            <person name="Carniel E."/>
            <person name="Hacker J."/>
        </authorList>
    </citation>
    <scope>NUCLEOTIDE SEQUENCE [LARGE SCALE GENOMIC DNA]</scope>
    <source>
        <strain>536 / UPEC</strain>
    </source>
</reference>
<evidence type="ECO:0000255" key="1">
    <source>
        <dbReference type="HAMAP-Rule" id="MF_00461"/>
    </source>
</evidence>
<evidence type="ECO:0000256" key="2">
    <source>
        <dbReference type="SAM" id="MobiDB-lite"/>
    </source>
</evidence>
<comment type="function">
    <text evidence="1">Part of a membrane-bound complex that couples electron transfer with translocation of ions across the membrane. Required to maintain the reduced state of SoxR.</text>
</comment>
<comment type="cofactor">
    <cofactor evidence="1">
        <name>[4Fe-4S] cluster</name>
        <dbReference type="ChEBI" id="CHEBI:49883"/>
    </cofactor>
    <text evidence="1">Binds 2 [4Fe-4S] clusters per subunit.</text>
</comment>
<comment type="subunit">
    <text evidence="1">The complex is composed of six subunits: RsxA, RsxB, RsxC, RsxD, RsxE and RsxG.</text>
</comment>
<comment type="subcellular location">
    <subcellularLocation>
        <location evidence="1">Cell inner membrane</location>
        <topology evidence="1">Peripheral membrane protein</topology>
    </subcellularLocation>
</comment>
<comment type="similarity">
    <text evidence="1">Belongs to the 4Fe4S bacterial-type ferredoxin family. RnfC subfamily.</text>
</comment>
<proteinExistence type="inferred from homology"/>
<name>RSXC_ECOL5</name>